<name>THSA_METTH</name>
<proteinExistence type="inferred from homology"/>
<protein>
    <recommendedName>
        <fullName>Thermosome subunit alpha</fullName>
    </recommendedName>
    <alternativeName>
        <fullName>Chaperonin subunit alpha</fullName>
    </alternativeName>
    <alternativeName>
        <fullName>Thermosome subunit 1</fullName>
    </alternativeName>
</protein>
<organism>
    <name type="scientific">Methanothermobacter thermautotrophicus (strain ATCC 29096 / DSM 1053 / JCM 10044 / NBRC 100330 / Delta H)</name>
    <name type="common">Methanobacterium thermoautotrophicum</name>
    <dbReference type="NCBI Taxonomy" id="187420"/>
    <lineage>
        <taxon>Archaea</taxon>
        <taxon>Methanobacteriati</taxon>
        <taxon>Methanobacteriota</taxon>
        <taxon>Methanomada group</taxon>
        <taxon>Methanobacteria</taxon>
        <taxon>Methanobacteriales</taxon>
        <taxon>Methanobacteriaceae</taxon>
        <taxon>Methanothermobacter</taxon>
    </lineage>
</organism>
<gene>
    <name type="primary">thsA</name>
    <name type="ordered locus">MTH_218</name>
</gene>
<comment type="function">
    <text evidence="1">Molecular chaperone; binds unfolded polypeptides in vitro, and has a weak ATPase activity.</text>
</comment>
<comment type="subunit">
    <text evidence="1">Forms a Heterooligomeric complex of two stacked eight-membered rings.</text>
</comment>
<comment type="similarity">
    <text evidence="2">Belongs to the TCP-1 chaperonin family.</text>
</comment>
<comment type="sequence caution" evidence="2">
    <conflict type="erroneous initiation">
        <sequence resource="EMBL-CDS" id="AAB84724"/>
    </conflict>
</comment>
<feature type="chain" id="PRO_0000128393" description="Thermosome subunit alpha">
    <location>
        <begin position="1"/>
        <end position="542"/>
    </location>
</feature>
<keyword id="KW-0067">ATP-binding</keyword>
<keyword id="KW-0143">Chaperone</keyword>
<keyword id="KW-0547">Nucleotide-binding</keyword>
<keyword id="KW-1185">Reference proteome</keyword>
<dbReference type="EMBL" id="AE000666">
    <property type="protein sequence ID" value="AAB84724.1"/>
    <property type="status" value="ALT_INIT"/>
    <property type="molecule type" value="Genomic_DNA"/>
</dbReference>
<dbReference type="PIR" id="H69126">
    <property type="entry name" value="H69126"/>
</dbReference>
<dbReference type="RefSeq" id="WP_048060772.1">
    <property type="nucleotide sequence ID" value="NC_000916.1"/>
</dbReference>
<dbReference type="SMR" id="O26320"/>
<dbReference type="FunCoup" id="O26320">
    <property type="interactions" value="195"/>
</dbReference>
<dbReference type="STRING" id="187420.MTH_218"/>
<dbReference type="PaxDb" id="187420-MTH_218"/>
<dbReference type="EnsemblBacteria" id="AAB84724">
    <property type="protein sequence ID" value="AAB84724"/>
    <property type="gene ID" value="MTH_218"/>
</dbReference>
<dbReference type="GeneID" id="82296692"/>
<dbReference type="KEGG" id="mth:MTH_218"/>
<dbReference type="PATRIC" id="fig|187420.15.peg.187"/>
<dbReference type="HOGENOM" id="CLU_008891_7_3_2"/>
<dbReference type="InParanoid" id="O26320"/>
<dbReference type="Proteomes" id="UP000005223">
    <property type="component" value="Chromosome"/>
</dbReference>
<dbReference type="GO" id="GO:0005524">
    <property type="term" value="F:ATP binding"/>
    <property type="evidence" value="ECO:0007669"/>
    <property type="project" value="UniProtKB-KW"/>
</dbReference>
<dbReference type="GO" id="GO:0016887">
    <property type="term" value="F:ATP hydrolysis activity"/>
    <property type="evidence" value="ECO:0007669"/>
    <property type="project" value="InterPro"/>
</dbReference>
<dbReference type="GO" id="GO:0140662">
    <property type="term" value="F:ATP-dependent protein folding chaperone"/>
    <property type="evidence" value="ECO:0007669"/>
    <property type="project" value="InterPro"/>
</dbReference>
<dbReference type="GO" id="GO:0051082">
    <property type="term" value="F:unfolded protein binding"/>
    <property type="evidence" value="ECO:0007669"/>
    <property type="project" value="InterPro"/>
</dbReference>
<dbReference type="CDD" id="cd03343">
    <property type="entry name" value="cpn60"/>
    <property type="match status" value="1"/>
</dbReference>
<dbReference type="FunFam" id="1.10.560.10:FF:000017">
    <property type="entry name" value="T-complex protein 1 subunit eta"/>
    <property type="match status" value="1"/>
</dbReference>
<dbReference type="Gene3D" id="3.50.7.10">
    <property type="entry name" value="GroEL"/>
    <property type="match status" value="1"/>
</dbReference>
<dbReference type="Gene3D" id="1.10.560.10">
    <property type="entry name" value="GroEL-like equatorial domain"/>
    <property type="match status" value="1"/>
</dbReference>
<dbReference type="Gene3D" id="3.30.260.10">
    <property type="entry name" value="TCP-1-like chaperonin intermediate domain"/>
    <property type="match status" value="1"/>
</dbReference>
<dbReference type="InterPro" id="IPR017998">
    <property type="entry name" value="Chaperone_TCP-1"/>
</dbReference>
<dbReference type="InterPro" id="IPR002194">
    <property type="entry name" value="Chaperonin_TCP-1_CS"/>
</dbReference>
<dbReference type="InterPro" id="IPR002423">
    <property type="entry name" value="Cpn60/GroEL/TCP-1"/>
</dbReference>
<dbReference type="InterPro" id="IPR027409">
    <property type="entry name" value="GroEL-like_apical_dom_sf"/>
</dbReference>
<dbReference type="InterPro" id="IPR027413">
    <property type="entry name" value="GROEL-like_equatorial_sf"/>
</dbReference>
<dbReference type="InterPro" id="IPR027410">
    <property type="entry name" value="TCP-1-like_intermed_sf"/>
</dbReference>
<dbReference type="InterPro" id="IPR053374">
    <property type="entry name" value="TCP-1_chaperonin"/>
</dbReference>
<dbReference type="InterPro" id="IPR054827">
    <property type="entry name" value="thermosome_alpha"/>
</dbReference>
<dbReference type="InterPro" id="IPR012714">
    <property type="entry name" value="Thermosome_arc"/>
</dbReference>
<dbReference type="NCBIfam" id="NF041082">
    <property type="entry name" value="thermosome_alpha"/>
    <property type="match status" value="1"/>
</dbReference>
<dbReference type="NCBIfam" id="TIGR02339">
    <property type="entry name" value="thermosome_arch"/>
    <property type="match status" value="1"/>
</dbReference>
<dbReference type="NCBIfam" id="NF041083">
    <property type="entry name" value="thermosome_beta"/>
    <property type="match status" value="1"/>
</dbReference>
<dbReference type="PANTHER" id="PTHR11353">
    <property type="entry name" value="CHAPERONIN"/>
    <property type="match status" value="1"/>
</dbReference>
<dbReference type="Pfam" id="PF00118">
    <property type="entry name" value="Cpn60_TCP1"/>
    <property type="match status" value="1"/>
</dbReference>
<dbReference type="PRINTS" id="PR00304">
    <property type="entry name" value="TCOMPLEXTCP1"/>
</dbReference>
<dbReference type="SUPFAM" id="SSF52029">
    <property type="entry name" value="GroEL apical domain-like"/>
    <property type="match status" value="1"/>
</dbReference>
<dbReference type="SUPFAM" id="SSF48592">
    <property type="entry name" value="GroEL equatorial domain-like"/>
    <property type="match status" value="1"/>
</dbReference>
<dbReference type="SUPFAM" id="SSF54849">
    <property type="entry name" value="GroEL-intermediate domain like"/>
    <property type="match status" value="1"/>
</dbReference>
<dbReference type="PROSITE" id="PS00750">
    <property type="entry name" value="TCP1_1"/>
    <property type="match status" value="1"/>
</dbReference>
<dbReference type="PROSITE" id="PS00751">
    <property type="entry name" value="TCP1_2"/>
    <property type="match status" value="1"/>
</dbReference>
<dbReference type="PROSITE" id="PS00995">
    <property type="entry name" value="TCP1_3"/>
    <property type="match status" value="1"/>
</dbReference>
<sequence>MAQGQQPIFILPQDTSRYVGREAQRINILAGKVLAETVRTTLGPKGMDKMLVDSLGDIVITNDGVTILREMDISHPAAKMLVEVAKTQEDEVGDGTTTAVIIAGELLKEAEKLIEMGVHPTIIALGYRNAALKAQEILEEISMEASDRDTLMKVAITAMTGKGSERAKEKLAELVVDAVMQVEEDGEIDKDNINIQRIQGASVNESRIVNGIVIDKSRADTSMPKRIEKARIALLKYPIEVKDLETDAKIRLTDPSQMQAFIEQEEQMIRDMVEKIKSSGANVVFCQKGIDDLALHYLSREGIMALKRVKKSDIKRIEKATGARLVTNIDDLTAEDLGEAGVIYEKKIFDEVLTFIEECRDPKAISIILRGSTKHVAEEMERALEDAIGVVASTLEDREVVAGGGAPEVEIARKLREYADTISGREQLAVSAFADALEIVPKTLAENAGLDSIDVLVDLRAAHEESPYMGIDVFDGNIVDMKEAGVIEPQRVKKQAIQSAAEAAEMILRIDDMIAARGFDVSSKDEEDMEGMGGMGGMPPMM</sequence>
<evidence type="ECO:0000250" key="1"/>
<evidence type="ECO:0000305" key="2"/>
<accession>O26320</accession>
<reference key="1">
    <citation type="journal article" date="1997" name="J. Bacteriol.">
        <title>Complete genome sequence of Methanobacterium thermoautotrophicum deltaH: functional analysis and comparative genomics.</title>
        <authorList>
            <person name="Smith D.R."/>
            <person name="Doucette-Stamm L.A."/>
            <person name="Deloughery C."/>
            <person name="Lee H.-M."/>
            <person name="Dubois J."/>
            <person name="Aldredge T."/>
            <person name="Bashirzadeh R."/>
            <person name="Blakely D."/>
            <person name="Cook R."/>
            <person name="Gilbert K."/>
            <person name="Harrison D."/>
            <person name="Hoang L."/>
            <person name="Keagle P."/>
            <person name="Lumm W."/>
            <person name="Pothier B."/>
            <person name="Qiu D."/>
            <person name="Spadafora R."/>
            <person name="Vicare R."/>
            <person name="Wang Y."/>
            <person name="Wierzbowski J."/>
            <person name="Gibson R."/>
            <person name="Jiwani N."/>
            <person name="Caruso A."/>
            <person name="Bush D."/>
            <person name="Safer H."/>
            <person name="Patwell D."/>
            <person name="Prabhakar S."/>
            <person name="McDougall S."/>
            <person name="Shimer G."/>
            <person name="Goyal A."/>
            <person name="Pietrovski S."/>
            <person name="Church G.M."/>
            <person name="Daniels C.J."/>
            <person name="Mao J.-I."/>
            <person name="Rice P."/>
            <person name="Noelling J."/>
            <person name="Reeve J.N."/>
        </authorList>
    </citation>
    <scope>NUCLEOTIDE SEQUENCE [LARGE SCALE GENOMIC DNA]</scope>
    <source>
        <strain>ATCC 29096 / DSM 1053 / JCM 10044 / NBRC 100330 / Delta H</strain>
    </source>
</reference>